<name>RPOZ_BACC0</name>
<accession>B7JJV7</accession>
<protein>
    <recommendedName>
        <fullName evidence="1">DNA-directed RNA polymerase subunit omega</fullName>
        <shortName evidence="1">RNAP omega subunit</shortName>
        <ecNumber evidence="1">2.7.7.6</ecNumber>
    </recommendedName>
    <alternativeName>
        <fullName evidence="1">RNA polymerase omega subunit</fullName>
    </alternativeName>
    <alternativeName>
        <fullName evidence="1">Transcriptase subunit omega</fullName>
    </alternativeName>
</protein>
<comment type="function">
    <text evidence="1">Promotes RNA polymerase assembly. Latches the N- and C-terminal regions of the beta' subunit thereby facilitating its interaction with the beta and alpha subunits.</text>
</comment>
<comment type="catalytic activity">
    <reaction evidence="1">
        <text>RNA(n) + a ribonucleoside 5'-triphosphate = RNA(n+1) + diphosphate</text>
        <dbReference type="Rhea" id="RHEA:21248"/>
        <dbReference type="Rhea" id="RHEA-COMP:14527"/>
        <dbReference type="Rhea" id="RHEA-COMP:17342"/>
        <dbReference type="ChEBI" id="CHEBI:33019"/>
        <dbReference type="ChEBI" id="CHEBI:61557"/>
        <dbReference type="ChEBI" id="CHEBI:140395"/>
        <dbReference type="EC" id="2.7.7.6"/>
    </reaction>
</comment>
<comment type="subunit">
    <text evidence="1">The RNAP catalytic core consists of 2 alpha, 1 beta, 1 beta' and 1 omega subunit. When a sigma factor is associated with the core the holoenzyme is formed, which can initiate transcription.</text>
</comment>
<comment type="similarity">
    <text evidence="1">Belongs to the RNA polymerase subunit omega family.</text>
</comment>
<reference key="1">
    <citation type="submission" date="2008-10" db="EMBL/GenBank/DDBJ databases">
        <title>Genome sequence of Bacillus cereus AH820.</title>
        <authorList>
            <person name="Dodson R.J."/>
            <person name="Durkin A.S."/>
            <person name="Rosovitz M.J."/>
            <person name="Rasko D.A."/>
            <person name="Hoffmaster A."/>
            <person name="Ravel J."/>
            <person name="Sutton G."/>
        </authorList>
    </citation>
    <scope>NUCLEOTIDE SEQUENCE [LARGE SCALE GENOMIC DNA]</scope>
    <source>
        <strain>AH820</strain>
    </source>
</reference>
<gene>
    <name evidence="1" type="primary">rpoZ</name>
    <name type="ordered locus">BCAH820_3884</name>
</gene>
<dbReference type="EC" id="2.7.7.6" evidence="1"/>
<dbReference type="EMBL" id="CP001283">
    <property type="protein sequence ID" value="ACK89450.1"/>
    <property type="molecule type" value="Genomic_DNA"/>
</dbReference>
<dbReference type="RefSeq" id="WP_000933970.1">
    <property type="nucleotide sequence ID" value="NC_011773.1"/>
</dbReference>
<dbReference type="SMR" id="B7JJV7"/>
<dbReference type="GeneID" id="75087006"/>
<dbReference type="KEGG" id="bcu:BCAH820_3884"/>
<dbReference type="HOGENOM" id="CLU_125406_6_0_9"/>
<dbReference type="Proteomes" id="UP000001363">
    <property type="component" value="Chromosome"/>
</dbReference>
<dbReference type="GO" id="GO:0000428">
    <property type="term" value="C:DNA-directed RNA polymerase complex"/>
    <property type="evidence" value="ECO:0007669"/>
    <property type="project" value="UniProtKB-KW"/>
</dbReference>
<dbReference type="GO" id="GO:0003677">
    <property type="term" value="F:DNA binding"/>
    <property type="evidence" value="ECO:0007669"/>
    <property type="project" value="UniProtKB-UniRule"/>
</dbReference>
<dbReference type="GO" id="GO:0003899">
    <property type="term" value="F:DNA-directed RNA polymerase activity"/>
    <property type="evidence" value="ECO:0007669"/>
    <property type="project" value="UniProtKB-UniRule"/>
</dbReference>
<dbReference type="GO" id="GO:0006351">
    <property type="term" value="P:DNA-templated transcription"/>
    <property type="evidence" value="ECO:0007669"/>
    <property type="project" value="UniProtKB-UniRule"/>
</dbReference>
<dbReference type="Gene3D" id="3.90.940.10">
    <property type="match status" value="1"/>
</dbReference>
<dbReference type="HAMAP" id="MF_00366">
    <property type="entry name" value="RNApol_bact_RpoZ"/>
    <property type="match status" value="1"/>
</dbReference>
<dbReference type="InterPro" id="IPR003716">
    <property type="entry name" value="DNA-dir_RNA_pol_omega"/>
</dbReference>
<dbReference type="InterPro" id="IPR006110">
    <property type="entry name" value="Pol_omega/Rpo6/RPB6"/>
</dbReference>
<dbReference type="InterPro" id="IPR036161">
    <property type="entry name" value="RPB6/omega-like_sf"/>
</dbReference>
<dbReference type="NCBIfam" id="TIGR00690">
    <property type="entry name" value="rpoZ"/>
    <property type="match status" value="1"/>
</dbReference>
<dbReference type="PANTHER" id="PTHR34476">
    <property type="entry name" value="DNA-DIRECTED RNA POLYMERASE SUBUNIT OMEGA"/>
    <property type="match status" value="1"/>
</dbReference>
<dbReference type="PANTHER" id="PTHR34476:SF1">
    <property type="entry name" value="DNA-DIRECTED RNA POLYMERASE SUBUNIT OMEGA"/>
    <property type="match status" value="1"/>
</dbReference>
<dbReference type="Pfam" id="PF01192">
    <property type="entry name" value="RNA_pol_Rpb6"/>
    <property type="match status" value="1"/>
</dbReference>
<dbReference type="SMART" id="SM01409">
    <property type="entry name" value="RNA_pol_Rpb6"/>
    <property type="match status" value="1"/>
</dbReference>
<dbReference type="SUPFAM" id="SSF63562">
    <property type="entry name" value="RPB6/omega subunit-like"/>
    <property type="match status" value="1"/>
</dbReference>
<keyword id="KW-0240">DNA-directed RNA polymerase</keyword>
<keyword id="KW-0548">Nucleotidyltransferase</keyword>
<keyword id="KW-0804">Transcription</keyword>
<keyword id="KW-0808">Transferase</keyword>
<proteinExistence type="inferred from homology"/>
<evidence type="ECO:0000255" key="1">
    <source>
        <dbReference type="HAMAP-Rule" id="MF_00366"/>
    </source>
</evidence>
<sequence length="70" mass="7752">MLNPSIDSLLTKIDSKYTLVTVAAKRAREMQLANNCVVEKPVSHKCVGKALEEIDMEALSYVPSEDKVTE</sequence>
<organism>
    <name type="scientific">Bacillus cereus (strain AH820)</name>
    <dbReference type="NCBI Taxonomy" id="405535"/>
    <lineage>
        <taxon>Bacteria</taxon>
        <taxon>Bacillati</taxon>
        <taxon>Bacillota</taxon>
        <taxon>Bacilli</taxon>
        <taxon>Bacillales</taxon>
        <taxon>Bacillaceae</taxon>
        <taxon>Bacillus</taxon>
        <taxon>Bacillus cereus group</taxon>
    </lineage>
</organism>
<feature type="chain" id="PRO_1000121186" description="DNA-directed RNA polymerase subunit omega">
    <location>
        <begin position="1"/>
        <end position="70"/>
    </location>
</feature>